<accession>B2K711</accession>
<protein>
    <recommendedName>
        <fullName evidence="1">tRNA-specific 2-thiouridylase MnmA</fullName>
        <ecNumber evidence="1">2.8.1.13</ecNumber>
    </recommendedName>
</protein>
<reference key="1">
    <citation type="submission" date="2008-04" db="EMBL/GenBank/DDBJ databases">
        <title>Complete sequence of Yersinia pseudotuberculosis PB1/+.</title>
        <authorList>
            <person name="Copeland A."/>
            <person name="Lucas S."/>
            <person name="Lapidus A."/>
            <person name="Glavina del Rio T."/>
            <person name="Dalin E."/>
            <person name="Tice H."/>
            <person name="Bruce D."/>
            <person name="Goodwin L."/>
            <person name="Pitluck S."/>
            <person name="Munk A.C."/>
            <person name="Brettin T."/>
            <person name="Detter J.C."/>
            <person name="Han C."/>
            <person name="Tapia R."/>
            <person name="Schmutz J."/>
            <person name="Larimer F."/>
            <person name="Land M."/>
            <person name="Hauser L."/>
            <person name="Challacombe J.F."/>
            <person name="Green L."/>
            <person name="Lindler L.E."/>
            <person name="Nikolich M.P."/>
            <person name="Richardson P."/>
        </authorList>
    </citation>
    <scope>NUCLEOTIDE SEQUENCE [LARGE SCALE GENOMIC DNA]</scope>
    <source>
        <strain>PB1/+</strain>
    </source>
</reference>
<sequence length="371" mass="41366">MSDNSQKKVIVGMSGGVDSSVSAYLLQQQGYQVAGLFMKNWEEDDDEEYCSAATDLADAQAVCDKLGMELHTVNFAAEYWDNVFELFLAEYKAGRTPNPDILCNKEIKFKAFLEFAAEDLGADYIATGHYVRRQDVDGKSRLLRGLDGNKDQSYFLYTLSHEQIAQSLFPVGELEKPEVRRIAEQLDLVTAKKKDSTGICFIGERKFRDFLGRYLPAQPGPIMTVDGQLVGKHQGLMYHTLGQRKGLGIGGTKEGGDDPWYVVDKDLDSNTLLVAQGHEHPRLMSVGLVAQQLHWVDRQPVTAPFRCVVKTRYRQQDIPCTVTPLDDERVDVRFDDPVAAVTPGQSAVFYQGEICLGGGIIEQRYPLTNPA</sequence>
<comment type="function">
    <text evidence="1">Catalyzes the 2-thiolation of uridine at the wobble position (U34) of tRNA(Lys), tRNA(Glu) and tRNA(Gln), leading to the formation of s(2)U34, the first step of tRNA-mnm(5)s(2)U34 synthesis. Sulfur is provided by IscS, via a sulfur-relay system. Binds ATP and its substrate tRNAs.</text>
</comment>
<comment type="catalytic activity">
    <reaction evidence="1">
        <text>S-sulfanyl-L-cysteinyl-[protein] + uridine(34) in tRNA + AH2 + ATP = 2-thiouridine(34) in tRNA + L-cysteinyl-[protein] + A + AMP + diphosphate + H(+)</text>
        <dbReference type="Rhea" id="RHEA:47032"/>
        <dbReference type="Rhea" id="RHEA-COMP:10131"/>
        <dbReference type="Rhea" id="RHEA-COMP:11726"/>
        <dbReference type="Rhea" id="RHEA-COMP:11727"/>
        <dbReference type="Rhea" id="RHEA-COMP:11728"/>
        <dbReference type="ChEBI" id="CHEBI:13193"/>
        <dbReference type="ChEBI" id="CHEBI:15378"/>
        <dbReference type="ChEBI" id="CHEBI:17499"/>
        <dbReference type="ChEBI" id="CHEBI:29950"/>
        <dbReference type="ChEBI" id="CHEBI:30616"/>
        <dbReference type="ChEBI" id="CHEBI:33019"/>
        <dbReference type="ChEBI" id="CHEBI:61963"/>
        <dbReference type="ChEBI" id="CHEBI:65315"/>
        <dbReference type="ChEBI" id="CHEBI:87170"/>
        <dbReference type="ChEBI" id="CHEBI:456215"/>
        <dbReference type="EC" id="2.8.1.13"/>
    </reaction>
</comment>
<comment type="subunit">
    <text evidence="1">Interacts with TusE.</text>
</comment>
<comment type="subcellular location">
    <subcellularLocation>
        <location evidence="1">Cytoplasm</location>
    </subcellularLocation>
</comment>
<comment type="similarity">
    <text evidence="1">Belongs to the MnmA/TRMU family.</text>
</comment>
<dbReference type="EC" id="2.8.1.13" evidence="1"/>
<dbReference type="EMBL" id="CP001048">
    <property type="protein sequence ID" value="ACC89474.1"/>
    <property type="molecule type" value="Genomic_DNA"/>
</dbReference>
<dbReference type="RefSeq" id="WP_002210913.1">
    <property type="nucleotide sequence ID" value="NZ_CP009780.1"/>
</dbReference>
<dbReference type="SMR" id="B2K711"/>
<dbReference type="GeneID" id="57976935"/>
<dbReference type="KEGG" id="ypb:YPTS_2513"/>
<dbReference type="PATRIC" id="fig|502801.10.peg.1925"/>
<dbReference type="GO" id="GO:0005737">
    <property type="term" value="C:cytoplasm"/>
    <property type="evidence" value="ECO:0007669"/>
    <property type="project" value="UniProtKB-SubCell"/>
</dbReference>
<dbReference type="GO" id="GO:0005524">
    <property type="term" value="F:ATP binding"/>
    <property type="evidence" value="ECO:0007669"/>
    <property type="project" value="UniProtKB-KW"/>
</dbReference>
<dbReference type="GO" id="GO:0000049">
    <property type="term" value="F:tRNA binding"/>
    <property type="evidence" value="ECO:0007669"/>
    <property type="project" value="UniProtKB-KW"/>
</dbReference>
<dbReference type="GO" id="GO:0103016">
    <property type="term" value="F:tRNA-uridine 2-sulfurtransferase activity"/>
    <property type="evidence" value="ECO:0007669"/>
    <property type="project" value="UniProtKB-EC"/>
</dbReference>
<dbReference type="GO" id="GO:0002143">
    <property type="term" value="P:tRNA wobble position uridine thiolation"/>
    <property type="evidence" value="ECO:0007669"/>
    <property type="project" value="TreeGrafter"/>
</dbReference>
<dbReference type="CDD" id="cd01998">
    <property type="entry name" value="MnmA_TRMU-like"/>
    <property type="match status" value="1"/>
</dbReference>
<dbReference type="FunFam" id="2.30.30.280:FF:000001">
    <property type="entry name" value="tRNA-specific 2-thiouridylase MnmA"/>
    <property type="match status" value="1"/>
</dbReference>
<dbReference type="FunFam" id="2.40.30.10:FF:000023">
    <property type="entry name" value="tRNA-specific 2-thiouridylase MnmA"/>
    <property type="match status" value="1"/>
</dbReference>
<dbReference type="FunFam" id="3.40.50.620:FF:000004">
    <property type="entry name" value="tRNA-specific 2-thiouridylase MnmA"/>
    <property type="match status" value="1"/>
</dbReference>
<dbReference type="Gene3D" id="2.30.30.280">
    <property type="entry name" value="Adenine nucleotide alpha hydrolases-like domains"/>
    <property type="match status" value="1"/>
</dbReference>
<dbReference type="Gene3D" id="3.40.50.620">
    <property type="entry name" value="HUPs"/>
    <property type="match status" value="1"/>
</dbReference>
<dbReference type="Gene3D" id="2.40.30.10">
    <property type="entry name" value="Translation factors"/>
    <property type="match status" value="1"/>
</dbReference>
<dbReference type="HAMAP" id="MF_00144">
    <property type="entry name" value="tRNA_thiouridyl_MnmA"/>
    <property type="match status" value="1"/>
</dbReference>
<dbReference type="InterPro" id="IPR004506">
    <property type="entry name" value="MnmA-like"/>
</dbReference>
<dbReference type="InterPro" id="IPR046885">
    <property type="entry name" value="MnmA-like_C"/>
</dbReference>
<dbReference type="InterPro" id="IPR046884">
    <property type="entry name" value="MnmA-like_central"/>
</dbReference>
<dbReference type="InterPro" id="IPR023382">
    <property type="entry name" value="MnmA-like_central_sf"/>
</dbReference>
<dbReference type="InterPro" id="IPR014729">
    <property type="entry name" value="Rossmann-like_a/b/a_fold"/>
</dbReference>
<dbReference type="NCBIfam" id="NF001138">
    <property type="entry name" value="PRK00143.1"/>
    <property type="match status" value="1"/>
</dbReference>
<dbReference type="NCBIfam" id="TIGR00420">
    <property type="entry name" value="trmU"/>
    <property type="match status" value="1"/>
</dbReference>
<dbReference type="PANTHER" id="PTHR11933:SF5">
    <property type="entry name" value="MITOCHONDRIAL TRNA-SPECIFIC 2-THIOURIDYLASE 1"/>
    <property type="match status" value="1"/>
</dbReference>
<dbReference type="PANTHER" id="PTHR11933">
    <property type="entry name" value="TRNA 5-METHYLAMINOMETHYL-2-THIOURIDYLATE -METHYLTRANSFERASE"/>
    <property type="match status" value="1"/>
</dbReference>
<dbReference type="Pfam" id="PF03054">
    <property type="entry name" value="tRNA_Me_trans"/>
    <property type="match status" value="1"/>
</dbReference>
<dbReference type="Pfam" id="PF20258">
    <property type="entry name" value="tRNA_Me_trans_C"/>
    <property type="match status" value="1"/>
</dbReference>
<dbReference type="Pfam" id="PF20259">
    <property type="entry name" value="tRNA_Me_trans_M"/>
    <property type="match status" value="1"/>
</dbReference>
<dbReference type="SUPFAM" id="SSF52402">
    <property type="entry name" value="Adenine nucleotide alpha hydrolases-like"/>
    <property type="match status" value="1"/>
</dbReference>
<gene>
    <name evidence="1" type="primary">mnmA</name>
    <name type="ordered locus">YPTS_2513</name>
</gene>
<proteinExistence type="inferred from homology"/>
<name>MNMA_YERPB</name>
<evidence type="ECO:0000255" key="1">
    <source>
        <dbReference type="HAMAP-Rule" id="MF_00144"/>
    </source>
</evidence>
<feature type="chain" id="PRO_0000349867" description="tRNA-specific 2-thiouridylase MnmA">
    <location>
        <begin position="1"/>
        <end position="371"/>
    </location>
</feature>
<feature type="region of interest" description="Interaction with target base in tRNA" evidence="1">
    <location>
        <begin position="98"/>
        <end position="100"/>
    </location>
</feature>
<feature type="region of interest" description="Interaction with tRNA" evidence="1">
    <location>
        <begin position="150"/>
        <end position="152"/>
    </location>
</feature>
<feature type="region of interest" description="Interaction with tRNA" evidence="1">
    <location>
        <begin position="312"/>
        <end position="313"/>
    </location>
</feature>
<feature type="active site" description="Nucleophile" evidence="1">
    <location>
        <position position="103"/>
    </location>
</feature>
<feature type="active site" description="Cysteine persulfide intermediate" evidence="1">
    <location>
        <position position="200"/>
    </location>
</feature>
<feature type="binding site" evidence="1">
    <location>
        <begin position="12"/>
        <end position="19"/>
    </location>
    <ligand>
        <name>ATP</name>
        <dbReference type="ChEBI" id="CHEBI:30616"/>
    </ligand>
</feature>
<feature type="binding site" evidence="1">
    <location>
        <position position="38"/>
    </location>
    <ligand>
        <name>ATP</name>
        <dbReference type="ChEBI" id="CHEBI:30616"/>
    </ligand>
</feature>
<feature type="binding site" evidence="1">
    <location>
        <position position="128"/>
    </location>
    <ligand>
        <name>ATP</name>
        <dbReference type="ChEBI" id="CHEBI:30616"/>
    </ligand>
</feature>
<feature type="site" description="Interaction with tRNA" evidence="1">
    <location>
        <position position="129"/>
    </location>
</feature>
<feature type="site" description="Interaction with tRNA" evidence="1">
    <location>
        <position position="345"/>
    </location>
</feature>
<feature type="disulfide bond" description="Alternate" evidence="1">
    <location>
        <begin position="103"/>
        <end position="200"/>
    </location>
</feature>
<keyword id="KW-0067">ATP-binding</keyword>
<keyword id="KW-0963">Cytoplasm</keyword>
<keyword id="KW-1015">Disulfide bond</keyword>
<keyword id="KW-0547">Nucleotide-binding</keyword>
<keyword id="KW-0694">RNA-binding</keyword>
<keyword id="KW-0808">Transferase</keyword>
<keyword id="KW-0819">tRNA processing</keyword>
<keyword id="KW-0820">tRNA-binding</keyword>
<organism>
    <name type="scientific">Yersinia pseudotuberculosis serotype IB (strain PB1/+)</name>
    <dbReference type="NCBI Taxonomy" id="502801"/>
    <lineage>
        <taxon>Bacteria</taxon>
        <taxon>Pseudomonadati</taxon>
        <taxon>Pseudomonadota</taxon>
        <taxon>Gammaproteobacteria</taxon>
        <taxon>Enterobacterales</taxon>
        <taxon>Yersiniaceae</taxon>
        <taxon>Yersinia</taxon>
    </lineage>
</organism>